<gene>
    <name evidence="1" type="primary">queA</name>
    <name type="ordered locus">Shew185_2808</name>
</gene>
<protein>
    <recommendedName>
        <fullName evidence="1">S-adenosylmethionine:tRNA ribosyltransferase-isomerase</fullName>
        <ecNumber evidence="1">2.4.99.17</ecNumber>
    </recommendedName>
    <alternativeName>
        <fullName evidence="1">Queuosine biosynthesis protein QueA</fullName>
    </alternativeName>
</protein>
<proteinExistence type="inferred from homology"/>
<sequence length="345" mass="38064">MRVADFSFDLPDELIARYPMAQRNASRLLTLDGNSGALGDKQFTDLLGMINPGDLMVFNNTRVIPARMFGQKASGGKLEILVERMLDDKRILAHVRSSKSPKVDSLILLDGGYQMKMVARHDTLFELELLSELTILEVLEAVGHMPLPPYIDRPDEDADKERYQTVYNQNPGAVAAPTAGLHFDDAMLDALKAKGVNIAFVTLHVGAGTFQPVRVDTILEHKMHSEWANVPQDVVDLIAQTKAAGKRVVAVGTTSVRSLESAARASQGELKAFSGDTDIFIYPGYQFQVVDAMVTNFHLPESTLIMLVSAFAGFDHVMAAYQHAIAQKYRFFSYGDAMFVTKKAH</sequence>
<name>QUEA_SHEB8</name>
<comment type="function">
    <text evidence="1">Transfers and isomerizes the ribose moiety from AdoMet to the 7-aminomethyl group of 7-deazaguanine (preQ1-tRNA) to give epoxyqueuosine (oQ-tRNA).</text>
</comment>
<comment type="catalytic activity">
    <reaction evidence="1">
        <text>7-aminomethyl-7-carbaguanosine(34) in tRNA + S-adenosyl-L-methionine = epoxyqueuosine(34) in tRNA + adenine + L-methionine + 2 H(+)</text>
        <dbReference type="Rhea" id="RHEA:32155"/>
        <dbReference type="Rhea" id="RHEA-COMP:10342"/>
        <dbReference type="Rhea" id="RHEA-COMP:18582"/>
        <dbReference type="ChEBI" id="CHEBI:15378"/>
        <dbReference type="ChEBI" id="CHEBI:16708"/>
        <dbReference type="ChEBI" id="CHEBI:57844"/>
        <dbReference type="ChEBI" id="CHEBI:59789"/>
        <dbReference type="ChEBI" id="CHEBI:82833"/>
        <dbReference type="ChEBI" id="CHEBI:194443"/>
        <dbReference type="EC" id="2.4.99.17"/>
    </reaction>
</comment>
<comment type="pathway">
    <text evidence="1">tRNA modification; tRNA-queuosine biosynthesis.</text>
</comment>
<comment type="subunit">
    <text evidence="1">Monomer.</text>
</comment>
<comment type="subcellular location">
    <subcellularLocation>
        <location evidence="1">Cytoplasm</location>
    </subcellularLocation>
</comment>
<comment type="similarity">
    <text evidence="1">Belongs to the QueA family.</text>
</comment>
<reference key="1">
    <citation type="submission" date="2007-07" db="EMBL/GenBank/DDBJ databases">
        <title>Complete sequence of chromosome of Shewanella baltica OS185.</title>
        <authorList>
            <consortium name="US DOE Joint Genome Institute"/>
            <person name="Copeland A."/>
            <person name="Lucas S."/>
            <person name="Lapidus A."/>
            <person name="Barry K."/>
            <person name="Glavina del Rio T."/>
            <person name="Dalin E."/>
            <person name="Tice H."/>
            <person name="Pitluck S."/>
            <person name="Sims D."/>
            <person name="Brettin T."/>
            <person name="Bruce D."/>
            <person name="Detter J.C."/>
            <person name="Han C."/>
            <person name="Schmutz J."/>
            <person name="Larimer F."/>
            <person name="Land M."/>
            <person name="Hauser L."/>
            <person name="Kyrpides N."/>
            <person name="Mikhailova N."/>
            <person name="Brettar I."/>
            <person name="Rodrigues J."/>
            <person name="Konstantinidis K."/>
            <person name="Tiedje J."/>
            <person name="Richardson P."/>
        </authorList>
    </citation>
    <scope>NUCLEOTIDE SEQUENCE [LARGE SCALE GENOMIC DNA]</scope>
    <source>
        <strain>OS185</strain>
    </source>
</reference>
<evidence type="ECO:0000255" key="1">
    <source>
        <dbReference type="HAMAP-Rule" id="MF_00113"/>
    </source>
</evidence>
<accession>A6WQ53</accession>
<dbReference type="EC" id="2.4.99.17" evidence="1"/>
<dbReference type="EMBL" id="CP000753">
    <property type="protein sequence ID" value="ABS08942.1"/>
    <property type="molecule type" value="Genomic_DNA"/>
</dbReference>
<dbReference type="RefSeq" id="WP_006082278.1">
    <property type="nucleotide sequence ID" value="NC_009665.1"/>
</dbReference>
<dbReference type="SMR" id="A6WQ53"/>
<dbReference type="GeneID" id="11772966"/>
<dbReference type="KEGG" id="sbm:Shew185_2808"/>
<dbReference type="HOGENOM" id="CLU_039110_1_0_6"/>
<dbReference type="UniPathway" id="UPA00392"/>
<dbReference type="GO" id="GO:0005737">
    <property type="term" value="C:cytoplasm"/>
    <property type="evidence" value="ECO:0007669"/>
    <property type="project" value="UniProtKB-SubCell"/>
</dbReference>
<dbReference type="GO" id="GO:0051075">
    <property type="term" value="F:S-adenosylmethionine:tRNA ribosyltransferase-isomerase activity"/>
    <property type="evidence" value="ECO:0007669"/>
    <property type="project" value="UniProtKB-EC"/>
</dbReference>
<dbReference type="GO" id="GO:0008616">
    <property type="term" value="P:queuosine biosynthetic process"/>
    <property type="evidence" value="ECO:0007669"/>
    <property type="project" value="UniProtKB-UniRule"/>
</dbReference>
<dbReference type="GO" id="GO:0002099">
    <property type="term" value="P:tRNA wobble guanine modification"/>
    <property type="evidence" value="ECO:0007669"/>
    <property type="project" value="TreeGrafter"/>
</dbReference>
<dbReference type="FunFam" id="2.40.10.240:FF:000001">
    <property type="entry name" value="S-adenosylmethionine:tRNA ribosyltransferase-isomerase"/>
    <property type="match status" value="1"/>
</dbReference>
<dbReference type="FunFam" id="3.40.1780.10:FF:000001">
    <property type="entry name" value="S-adenosylmethionine:tRNA ribosyltransferase-isomerase"/>
    <property type="match status" value="1"/>
</dbReference>
<dbReference type="Gene3D" id="2.40.10.240">
    <property type="entry name" value="QueA-like"/>
    <property type="match status" value="1"/>
</dbReference>
<dbReference type="Gene3D" id="3.40.1780.10">
    <property type="entry name" value="QueA-like"/>
    <property type="match status" value="1"/>
</dbReference>
<dbReference type="HAMAP" id="MF_00113">
    <property type="entry name" value="QueA"/>
    <property type="match status" value="1"/>
</dbReference>
<dbReference type="InterPro" id="IPR003699">
    <property type="entry name" value="QueA"/>
</dbReference>
<dbReference type="InterPro" id="IPR042118">
    <property type="entry name" value="QueA_dom1"/>
</dbReference>
<dbReference type="InterPro" id="IPR042119">
    <property type="entry name" value="QueA_dom2"/>
</dbReference>
<dbReference type="InterPro" id="IPR036100">
    <property type="entry name" value="QueA_sf"/>
</dbReference>
<dbReference type="NCBIfam" id="NF001140">
    <property type="entry name" value="PRK00147.1"/>
    <property type="match status" value="1"/>
</dbReference>
<dbReference type="NCBIfam" id="TIGR00113">
    <property type="entry name" value="queA"/>
    <property type="match status" value="1"/>
</dbReference>
<dbReference type="PANTHER" id="PTHR30307">
    <property type="entry name" value="S-ADENOSYLMETHIONINE:TRNA RIBOSYLTRANSFERASE-ISOMERASE"/>
    <property type="match status" value="1"/>
</dbReference>
<dbReference type="PANTHER" id="PTHR30307:SF0">
    <property type="entry name" value="S-ADENOSYLMETHIONINE:TRNA RIBOSYLTRANSFERASE-ISOMERASE"/>
    <property type="match status" value="1"/>
</dbReference>
<dbReference type="Pfam" id="PF02547">
    <property type="entry name" value="Queuosine_synth"/>
    <property type="match status" value="1"/>
</dbReference>
<dbReference type="SUPFAM" id="SSF111337">
    <property type="entry name" value="QueA-like"/>
    <property type="match status" value="1"/>
</dbReference>
<feature type="chain" id="PRO_1000015269" description="S-adenosylmethionine:tRNA ribosyltransferase-isomerase">
    <location>
        <begin position="1"/>
        <end position="345"/>
    </location>
</feature>
<keyword id="KW-0963">Cytoplasm</keyword>
<keyword id="KW-0671">Queuosine biosynthesis</keyword>
<keyword id="KW-0949">S-adenosyl-L-methionine</keyword>
<keyword id="KW-0808">Transferase</keyword>
<organism>
    <name type="scientific">Shewanella baltica (strain OS185)</name>
    <dbReference type="NCBI Taxonomy" id="402882"/>
    <lineage>
        <taxon>Bacteria</taxon>
        <taxon>Pseudomonadati</taxon>
        <taxon>Pseudomonadota</taxon>
        <taxon>Gammaproteobacteria</taxon>
        <taxon>Alteromonadales</taxon>
        <taxon>Shewanellaceae</taxon>
        <taxon>Shewanella</taxon>
    </lineage>
</organism>